<name>GLMM_PSE14</name>
<keyword id="KW-0413">Isomerase</keyword>
<keyword id="KW-0460">Magnesium</keyword>
<keyword id="KW-0479">Metal-binding</keyword>
<keyword id="KW-0597">Phosphoprotein</keyword>
<sequence length="447" mass="48067">MTTRKYFGTDGIRGRVGQFPITPEFMLKLGWAAGMAFRKMGACRILVGKDTRISGYMFESALEAGLSAAGADVLLLGPMPTPAIAYLTRTFHAEAGIVISASHNPHYDNGIKFFSGQGTKLPDEIEMMIEELLDAPMTVAESENLGKVSRINDAAGRYIEFCKSSVPTSTDFAGLKVVIDCAHGATYKVAPNVFRELGAQVVVLSAQPDGLNINKNCGSTHMEALQAAVVAEHADMGIGFDGDGDRVLMVDHTGTIVDGDELLYIIARDLHERGRLQGGVVGTLMSNLGLELALAEQSIPFVRANVGDRYVIAELLERNWQIGGENSGHIVCFQHATTGDAIIASLQVILALRRSGISLAEARLKLRKCPQILINVRFAGSGVDPVSHPSVQQACARVTEQMAGRGRVLLRKSGTEPLVRVMVEGEDETQVRSYAEELAKLVAEVCA</sequence>
<feature type="chain" id="PRO_0000147941" description="Phosphoglucosamine mutase">
    <location>
        <begin position="1"/>
        <end position="447"/>
    </location>
</feature>
<feature type="active site" description="Phosphoserine intermediate" evidence="1">
    <location>
        <position position="102"/>
    </location>
</feature>
<feature type="binding site" description="via phosphate group" evidence="1">
    <location>
        <position position="102"/>
    </location>
    <ligand>
        <name>Mg(2+)</name>
        <dbReference type="ChEBI" id="CHEBI:18420"/>
    </ligand>
</feature>
<feature type="binding site" evidence="1">
    <location>
        <position position="241"/>
    </location>
    <ligand>
        <name>Mg(2+)</name>
        <dbReference type="ChEBI" id="CHEBI:18420"/>
    </ligand>
</feature>
<feature type="binding site" evidence="1">
    <location>
        <position position="243"/>
    </location>
    <ligand>
        <name>Mg(2+)</name>
        <dbReference type="ChEBI" id="CHEBI:18420"/>
    </ligand>
</feature>
<feature type="binding site" evidence="1">
    <location>
        <position position="245"/>
    </location>
    <ligand>
        <name>Mg(2+)</name>
        <dbReference type="ChEBI" id="CHEBI:18420"/>
    </ligand>
</feature>
<feature type="modified residue" description="Phosphoserine" evidence="1">
    <location>
        <position position="102"/>
    </location>
</feature>
<gene>
    <name evidence="1" type="primary">glmM</name>
    <name type="ordered locus">PSPPH_4196</name>
</gene>
<proteinExistence type="inferred from homology"/>
<reference key="1">
    <citation type="journal article" date="2005" name="J. Bacteriol.">
        <title>Whole-genome sequence analysis of Pseudomonas syringae pv. phaseolicola 1448A reveals divergence among pathovars in genes involved in virulence and transposition.</title>
        <authorList>
            <person name="Joardar V."/>
            <person name="Lindeberg M."/>
            <person name="Jackson R.W."/>
            <person name="Selengut J."/>
            <person name="Dodson R."/>
            <person name="Brinkac L.M."/>
            <person name="Daugherty S.C."/>
            <person name="DeBoy R.T."/>
            <person name="Durkin A.S."/>
            <person name="Gwinn Giglio M."/>
            <person name="Madupu R."/>
            <person name="Nelson W.C."/>
            <person name="Rosovitz M.J."/>
            <person name="Sullivan S.A."/>
            <person name="Crabtree J."/>
            <person name="Creasy T."/>
            <person name="Davidsen T.M."/>
            <person name="Haft D.H."/>
            <person name="Zafar N."/>
            <person name="Zhou L."/>
            <person name="Halpin R."/>
            <person name="Holley T."/>
            <person name="Khouri H.M."/>
            <person name="Feldblyum T.V."/>
            <person name="White O."/>
            <person name="Fraser C.M."/>
            <person name="Chatterjee A.K."/>
            <person name="Cartinhour S."/>
            <person name="Schneider D."/>
            <person name="Mansfield J.W."/>
            <person name="Collmer A."/>
            <person name="Buell R."/>
        </authorList>
    </citation>
    <scope>NUCLEOTIDE SEQUENCE [LARGE SCALE GENOMIC DNA]</scope>
    <source>
        <strain>1448A / Race 6</strain>
    </source>
</reference>
<organism>
    <name type="scientific">Pseudomonas savastanoi pv. phaseolicola (strain 1448A / Race 6)</name>
    <name type="common">Pseudomonas syringae pv. phaseolicola (strain 1448A / Race 6)</name>
    <dbReference type="NCBI Taxonomy" id="264730"/>
    <lineage>
        <taxon>Bacteria</taxon>
        <taxon>Pseudomonadati</taxon>
        <taxon>Pseudomonadota</taxon>
        <taxon>Gammaproteobacteria</taxon>
        <taxon>Pseudomonadales</taxon>
        <taxon>Pseudomonadaceae</taxon>
        <taxon>Pseudomonas</taxon>
    </lineage>
</organism>
<accession>Q48E72</accession>
<protein>
    <recommendedName>
        <fullName evidence="1">Phosphoglucosamine mutase</fullName>
        <ecNumber evidence="1">5.4.2.10</ecNumber>
    </recommendedName>
</protein>
<comment type="function">
    <text evidence="1">Catalyzes the conversion of glucosamine-6-phosphate to glucosamine-1-phosphate.</text>
</comment>
<comment type="catalytic activity">
    <reaction evidence="1">
        <text>alpha-D-glucosamine 1-phosphate = D-glucosamine 6-phosphate</text>
        <dbReference type="Rhea" id="RHEA:23424"/>
        <dbReference type="ChEBI" id="CHEBI:58516"/>
        <dbReference type="ChEBI" id="CHEBI:58725"/>
        <dbReference type="EC" id="5.4.2.10"/>
    </reaction>
</comment>
<comment type="cofactor">
    <cofactor evidence="1">
        <name>Mg(2+)</name>
        <dbReference type="ChEBI" id="CHEBI:18420"/>
    </cofactor>
    <text evidence="1">Binds 1 Mg(2+) ion per subunit.</text>
</comment>
<comment type="PTM">
    <text evidence="1">Activated by phosphorylation.</text>
</comment>
<comment type="similarity">
    <text evidence="1">Belongs to the phosphohexose mutase family.</text>
</comment>
<evidence type="ECO:0000255" key="1">
    <source>
        <dbReference type="HAMAP-Rule" id="MF_01554"/>
    </source>
</evidence>
<dbReference type="EC" id="5.4.2.10" evidence="1"/>
<dbReference type="EMBL" id="CP000058">
    <property type="protein sequence ID" value="AAZ37823.1"/>
    <property type="molecule type" value="Genomic_DNA"/>
</dbReference>
<dbReference type="RefSeq" id="WP_004666211.1">
    <property type="nucleotide sequence ID" value="NC_005773.3"/>
</dbReference>
<dbReference type="SMR" id="Q48E72"/>
<dbReference type="KEGG" id="psp:PSPPH_4196"/>
<dbReference type="eggNOG" id="COG1109">
    <property type="taxonomic scope" value="Bacteria"/>
</dbReference>
<dbReference type="HOGENOM" id="CLU_016950_7_0_6"/>
<dbReference type="Proteomes" id="UP000000551">
    <property type="component" value="Chromosome"/>
</dbReference>
<dbReference type="GO" id="GO:0005829">
    <property type="term" value="C:cytosol"/>
    <property type="evidence" value="ECO:0007669"/>
    <property type="project" value="TreeGrafter"/>
</dbReference>
<dbReference type="GO" id="GO:0000287">
    <property type="term" value="F:magnesium ion binding"/>
    <property type="evidence" value="ECO:0007669"/>
    <property type="project" value="UniProtKB-UniRule"/>
</dbReference>
<dbReference type="GO" id="GO:0008966">
    <property type="term" value="F:phosphoglucosamine mutase activity"/>
    <property type="evidence" value="ECO:0007669"/>
    <property type="project" value="UniProtKB-UniRule"/>
</dbReference>
<dbReference type="GO" id="GO:0004615">
    <property type="term" value="F:phosphomannomutase activity"/>
    <property type="evidence" value="ECO:0007669"/>
    <property type="project" value="TreeGrafter"/>
</dbReference>
<dbReference type="GO" id="GO:0005975">
    <property type="term" value="P:carbohydrate metabolic process"/>
    <property type="evidence" value="ECO:0007669"/>
    <property type="project" value="InterPro"/>
</dbReference>
<dbReference type="GO" id="GO:0009252">
    <property type="term" value="P:peptidoglycan biosynthetic process"/>
    <property type="evidence" value="ECO:0007669"/>
    <property type="project" value="TreeGrafter"/>
</dbReference>
<dbReference type="GO" id="GO:0006048">
    <property type="term" value="P:UDP-N-acetylglucosamine biosynthetic process"/>
    <property type="evidence" value="ECO:0007669"/>
    <property type="project" value="TreeGrafter"/>
</dbReference>
<dbReference type="CDD" id="cd05802">
    <property type="entry name" value="GlmM"/>
    <property type="match status" value="1"/>
</dbReference>
<dbReference type="FunFam" id="3.30.310.50:FF:000001">
    <property type="entry name" value="Phosphoglucosamine mutase"/>
    <property type="match status" value="1"/>
</dbReference>
<dbReference type="FunFam" id="3.40.120.10:FF:000001">
    <property type="entry name" value="Phosphoglucosamine mutase"/>
    <property type="match status" value="1"/>
</dbReference>
<dbReference type="FunFam" id="3.40.120.10:FF:000003">
    <property type="entry name" value="Phosphoglucosamine mutase"/>
    <property type="match status" value="1"/>
</dbReference>
<dbReference type="Gene3D" id="3.40.120.10">
    <property type="entry name" value="Alpha-D-Glucose-1,6-Bisphosphate, subunit A, domain 3"/>
    <property type="match status" value="3"/>
</dbReference>
<dbReference type="Gene3D" id="3.30.310.50">
    <property type="entry name" value="Alpha-D-phosphohexomutase, C-terminal domain"/>
    <property type="match status" value="1"/>
</dbReference>
<dbReference type="HAMAP" id="MF_01554_B">
    <property type="entry name" value="GlmM_B"/>
    <property type="match status" value="1"/>
</dbReference>
<dbReference type="InterPro" id="IPR005844">
    <property type="entry name" value="A-D-PHexomutase_a/b/a-I"/>
</dbReference>
<dbReference type="InterPro" id="IPR016055">
    <property type="entry name" value="A-D-PHexomutase_a/b/a-I/II/III"/>
</dbReference>
<dbReference type="InterPro" id="IPR005845">
    <property type="entry name" value="A-D-PHexomutase_a/b/a-II"/>
</dbReference>
<dbReference type="InterPro" id="IPR005846">
    <property type="entry name" value="A-D-PHexomutase_a/b/a-III"/>
</dbReference>
<dbReference type="InterPro" id="IPR005843">
    <property type="entry name" value="A-D-PHexomutase_C"/>
</dbReference>
<dbReference type="InterPro" id="IPR036900">
    <property type="entry name" value="A-D-PHexomutase_C_sf"/>
</dbReference>
<dbReference type="InterPro" id="IPR016066">
    <property type="entry name" value="A-D-PHexomutase_CS"/>
</dbReference>
<dbReference type="InterPro" id="IPR005841">
    <property type="entry name" value="Alpha-D-phosphohexomutase_SF"/>
</dbReference>
<dbReference type="InterPro" id="IPR006352">
    <property type="entry name" value="GlmM_bact"/>
</dbReference>
<dbReference type="InterPro" id="IPR050060">
    <property type="entry name" value="Phosphoglucosamine_mutase"/>
</dbReference>
<dbReference type="NCBIfam" id="TIGR01455">
    <property type="entry name" value="glmM"/>
    <property type="match status" value="1"/>
</dbReference>
<dbReference type="NCBIfam" id="NF008139">
    <property type="entry name" value="PRK10887.1"/>
    <property type="match status" value="1"/>
</dbReference>
<dbReference type="PANTHER" id="PTHR42946:SF1">
    <property type="entry name" value="PHOSPHOGLUCOMUTASE (ALPHA-D-GLUCOSE-1,6-BISPHOSPHATE-DEPENDENT)"/>
    <property type="match status" value="1"/>
</dbReference>
<dbReference type="PANTHER" id="PTHR42946">
    <property type="entry name" value="PHOSPHOHEXOSE MUTASE"/>
    <property type="match status" value="1"/>
</dbReference>
<dbReference type="Pfam" id="PF02878">
    <property type="entry name" value="PGM_PMM_I"/>
    <property type="match status" value="1"/>
</dbReference>
<dbReference type="Pfam" id="PF02879">
    <property type="entry name" value="PGM_PMM_II"/>
    <property type="match status" value="1"/>
</dbReference>
<dbReference type="Pfam" id="PF02880">
    <property type="entry name" value="PGM_PMM_III"/>
    <property type="match status" value="1"/>
</dbReference>
<dbReference type="Pfam" id="PF00408">
    <property type="entry name" value="PGM_PMM_IV"/>
    <property type="match status" value="1"/>
</dbReference>
<dbReference type="PRINTS" id="PR00509">
    <property type="entry name" value="PGMPMM"/>
</dbReference>
<dbReference type="SUPFAM" id="SSF55957">
    <property type="entry name" value="Phosphoglucomutase, C-terminal domain"/>
    <property type="match status" value="1"/>
</dbReference>
<dbReference type="SUPFAM" id="SSF53738">
    <property type="entry name" value="Phosphoglucomutase, first 3 domains"/>
    <property type="match status" value="3"/>
</dbReference>
<dbReference type="PROSITE" id="PS00710">
    <property type="entry name" value="PGM_PMM"/>
    <property type="match status" value="1"/>
</dbReference>